<proteinExistence type="inferred from homology"/>
<organism>
    <name type="scientific">Methanospirillum hungatei JF-1 (strain ATCC 27890 / DSM 864 / NBRC 100397 / JF-1)</name>
    <dbReference type="NCBI Taxonomy" id="323259"/>
    <lineage>
        <taxon>Archaea</taxon>
        <taxon>Methanobacteriati</taxon>
        <taxon>Methanobacteriota</taxon>
        <taxon>Stenosarchaea group</taxon>
        <taxon>Methanomicrobia</taxon>
        <taxon>Methanomicrobiales</taxon>
        <taxon>Methanospirillaceae</taxon>
        <taxon>Methanospirillum</taxon>
    </lineage>
</organism>
<keyword id="KW-0028">Amino-acid biosynthesis</keyword>
<keyword id="KW-0963">Cytoplasm</keyword>
<keyword id="KW-0368">Histidine biosynthesis</keyword>
<keyword id="KW-0413">Isomerase</keyword>
<keyword id="KW-1185">Reference proteome</keyword>
<feature type="chain" id="PRO_0000290578" description="1-(5-phosphoribosyl)-5-[(5-phosphoribosylamino)methylideneamino] imidazole-4-carboxamide isomerase">
    <location>
        <begin position="1"/>
        <end position="236"/>
    </location>
</feature>
<feature type="active site" description="Proton acceptor" evidence="1">
    <location>
        <position position="8"/>
    </location>
</feature>
<feature type="active site" description="Proton donor" evidence="1">
    <location>
        <position position="129"/>
    </location>
</feature>
<dbReference type="EC" id="5.3.1.16" evidence="1"/>
<dbReference type="EMBL" id="CP000254">
    <property type="protein sequence ID" value="ABD40671.1"/>
    <property type="molecule type" value="Genomic_DNA"/>
</dbReference>
<dbReference type="RefSeq" id="WP_011447950.1">
    <property type="nucleotide sequence ID" value="NC_007796.1"/>
</dbReference>
<dbReference type="SMR" id="Q2FN18"/>
<dbReference type="FunCoup" id="Q2FN18">
    <property type="interactions" value="114"/>
</dbReference>
<dbReference type="STRING" id="323259.Mhun_0921"/>
<dbReference type="EnsemblBacteria" id="ABD40671">
    <property type="protein sequence ID" value="ABD40671"/>
    <property type="gene ID" value="Mhun_0921"/>
</dbReference>
<dbReference type="GeneID" id="3924608"/>
<dbReference type="KEGG" id="mhu:Mhun_0921"/>
<dbReference type="eggNOG" id="arCOG00618">
    <property type="taxonomic scope" value="Archaea"/>
</dbReference>
<dbReference type="HOGENOM" id="CLU_048577_1_1_2"/>
<dbReference type="InParanoid" id="Q2FN18"/>
<dbReference type="OrthoDB" id="52866at2157"/>
<dbReference type="UniPathway" id="UPA00031">
    <property type="reaction ID" value="UER00009"/>
</dbReference>
<dbReference type="Proteomes" id="UP000001941">
    <property type="component" value="Chromosome"/>
</dbReference>
<dbReference type="GO" id="GO:0005737">
    <property type="term" value="C:cytoplasm"/>
    <property type="evidence" value="ECO:0007669"/>
    <property type="project" value="UniProtKB-SubCell"/>
</dbReference>
<dbReference type="GO" id="GO:0003949">
    <property type="term" value="F:1-(5-phosphoribosyl)-5-[(5-phosphoribosylamino)methylideneamino]imidazole-4-carboxamide isomerase activity"/>
    <property type="evidence" value="ECO:0007669"/>
    <property type="project" value="UniProtKB-UniRule"/>
</dbReference>
<dbReference type="GO" id="GO:0000105">
    <property type="term" value="P:L-histidine biosynthetic process"/>
    <property type="evidence" value="ECO:0007669"/>
    <property type="project" value="UniProtKB-UniRule"/>
</dbReference>
<dbReference type="GO" id="GO:0000162">
    <property type="term" value="P:L-tryptophan biosynthetic process"/>
    <property type="evidence" value="ECO:0007669"/>
    <property type="project" value="TreeGrafter"/>
</dbReference>
<dbReference type="CDD" id="cd04732">
    <property type="entry name" value="HisA"/>
    <property type="match status" value="1"/>
</dbReference>
<dbReference type="FunFam" id="3.20.20.70:FF:000009">
    <property type="entry name" value="1-(5-phosphoribosyl)-5-[(5-phosphoribosylamino)methylideneamino] imidazole-4-carboxamide isomerase"/>
    <property type="match status" value="1"/>
</dbReference>
<dbReference type="Gene3D" id="3.20.20.70">
    <property type="entry name" value="Aldolase class I"/>
    <property type="match status" value="1"/>
</dbReference>
<dbReference type="HAMAP" id="MF_01014">
    <property type="entry name" value="HisA"/>
    <property type="match status" value="1"/>
</dbReference>
<dbReference type="InterPro" id="IPR013785">
    <property type="entry name" value="Aldolase_TIM"/>
</dbReference>
<dbReference type="InterPro" id="IPR006062">
    <property type="entry name" value="His_biosynth"/>
</dbReference>
<dbReference type="InterPro" id="IPR044524">
    <property type="entry name" value="Isoase_HisA-like"/>
</dbReference>
<dbReference type="InterPro" id="IPR023016">
    <property type="entry name" value="Isoase_HisA-like_bact"/>
</dbReference>
<dbReference type="InterPro" id="IPR011060">
    <property type="entry name" value="RibuloseP-bd_barrel"/>
</dbReference>
<dbReference type="NCBIfam" id="NF010112">
    <property type="entry name" value="PRK13585.1"/>
    <property type="match status" value="1"/>
</dbReference>
<dbReference type="PANTHER" id="PTHR43090">
    <property type="entry name" value="1-(5-PHOSPHORIBOSYL)-5-[(5-PHOSPHORIBOSYLAMINO)METHYLIDENEAMINO] IMIDAZOLE-4-CARBOXAMIDE ISOMERASE"/>
    <property type="match status" value="1"/>
</dbReference>
<dbReference type="PANTHER" id="PTHR43090:SF7">
    <property type="entry name" value="1-(5-PHOSPHORIBOSYL)-5-[(5-PHOSPHORIBOSYLAMINO)METHYLIDENEAMINO] IMIDAZOLE-4-CARBOXAMIDE ISOMERASE"/>
    <property type="match status" value="1"/>
</dbReference>
<dbReference type="Pfam" id="PF00977">
    <property type="entry name" value="His_biosynth"/>
    <property type="match status" value="1"/>
</dbReference>
<dbReference type="SUPFAM" id="SSF51366">
    <property type="entry name" value="Ribulose-phoshate binding barrel"/>
    <property type="match status" value="1"/>
</dbReference>
<name>HIS4_METHJ</name>
<protein>
    <recommendedName>
        <fullName evidence="1">1-(5-phosphoribosyl)-5-[(5-phosphoribosylamino)methylideneamino] imidazole-4-carboxamide isomerase</fullName>
        <ecNumber evidence="1">5.3.1.16</ecNumber>
    </recommendedName>
    <alternativeName>
        <fullName evidence="1">Phosphoribosylformimino-5-aminoimidazole carboxamide ribotide isomerase</fullName>
    </alternativeName>
</protein>
<evidence type="ECO:0000255" key="1">
    <source>
        <dbReference type="HAMAP-Rule" id="MF_01014"/>
    </source>
</evidence>
<gene>
    <name evidence="1" type="primary">hisA</name>
    <name type="ordered locus">Mhun_0921</name>
</gene>
<accession>Q2FN18</accession>
<reference key="1">
    <citation type="journal article" date="2016" name="Stand. Genomic Sci.">
        <title>Complete genome sequence of Methanospirillum hungatei type strain JF1.</title>
        <authorList>
            <person name="Gunsalus R.P."/>
            <person name="Cook L.E."/>
            <person name="Crable B."/>
            <person name="Rohlin L."/>
            <person name="McDonald E."/>
            <person name="Mouttaki H."/>
            <person name="Sieber J.R."/>
            <person name="Poweleit N."/>
            <person name="Zhou H."/>
            <person name="Lapidus A.L."/>
            <person name="Daligault H.E."/>
            <person name="Land M."/>
            <person name="Gilna P."/>
            <person name="Ivanova N."/>
            <person name="Kyrpides N."/>
            <person name="Culley D.E."/>
            <person name="McInerney M.J."/>
        </authorList>
    </citation>
    <scope>NUCLEOTIDE SEQUENCE [LARGE SCALE GENOMIC DNA]</scope>
    <source>
        <strain>ATCC 27890 / DSM 864 / NBRC 100397 / JF-1</strain>
    </source>
</reference>
<sequence>MIVFPAVDILGGRCVQLVQGKRETATSYGDPLLCAESWINQGAEALHIVNLDGAFGSSKLNAEKITDVIIRTGVKTQLGGGIRSLDDARSWLDCGVDRIIISTFAADDPECLTILSEEYGSDRIMAGVDARAGEMVTHGWERPAGDFLEWADLFIRKGAGSLLYTNVSVEGLCNGIDPKPIRDLLSTVSVPVVVAGGITSPSDIKILKEADAAGVVLGSALYSGKITLQEALEAAG</sequence>
<comment type="catalytic activity">
    <reaction evidence="1">
        <text>1-(5-phospho-beta-D-ribosyl)-5-[(5-phospho-beta-D-ribosylamino)methylideneamino]imidazole-4-carboxamide = 5-[(5-phospho-1-deoxy-D-ribulos-1-ylimino)methylamino]-1-(5-phospho-beta-D-ribosyl)imidazole-4-carboxamide</text>
        <dbReference type="Rhea" id="RHEA:15469"/>
        <dbReference type="ChEBI" id="CHEBI:58435"/>
        <dbReference type="ChEBI" id="CHEBI:58525"/>
        <dbReference type="EC" id="5.3.1.16"/>
    </reaction>
</comment>
<comment type="pathway">
    <text evidence="1">Amino-acid biosynthesis; L-histidine biosynthesis; L-histidine from 5-phospho-alpha-D-ribose 1-diphosphate: step 4/9.</text>
</comment>
<comment type="subcellular location">
    <subcellularLocation>
        <location evidence="1">Cytoplasm</location>
    </subcellularLocation>
</comment>
<comment type="similarity">
    <text evidence="1">Belongs to the HisA/HisF family.</text>
</comment>